<evidence type="ECO:0000255" key="1">
    <source>
        <dbReference type="HAMAP-Rule" id="MF_00822"/>
    </source>
</evidence>
<keyword id="KW-0143">Chaperone</keyword>
<keyword id="KW-0963">Cytoplasm</keyword>
<keyword id="KW-0533">Nickel</keyword>
<reference key="1">
    <citation type="journal article" date="2008" name="Antimicrob. Agents Chemother.">
        <title>Whole-genome pyrosequencing of an epidemic multidrug-resistant Acinetobacter baumannii strain belonging to the European clone II group.</title>
        <authorList>
            <person name="Iacono M."/>
            <person name="Villa L."/>
            <person name="Fortini D."/>
            <person name="Bordoni R."/>
            <person name="Imperi F."/>
            <person name="Bonnal R.J."/>
            <person name="Sicheritz-Ponten T."/>
            <person name="De Bellis G."/>
            <person name="Visca P."/>
            <person name="Cassone A."/>
            <person name="Carattoli A."/>
        </authorList>
    </citation>
    <scope>NUCLEOTIDE SEQUENCE [LARGE SCALE GENOMIC DNA]</scope>
    <source>
        <strain>ACICU</strain>
    </source>
</reference>
<protein>
    <recommendedName>
        <fullName evidence="1">Urease accessory protein UreE</fullName>
    </recommendedName>
</protein>
<proteinExistence type="inferred from homology"/>
<sequence length="160" mass="17929">MKIYTQRLEDISPDQAFETVELTFDTRQKSRFRAALASGVDIGADLPRTGILRSGSYIATQEGDVLRVDAKPERLMKVTAQTEFDLLKAAYHLGNRHVPLMLTPTALYFEPDHVLAEMVEGLGLTVTETDHPFEPESGAYAQHSHDHRLSPIKVLHHVHS</sequence>
<gene>
    <name evidence="1" type="primary">ureE</name>
    <name type="ordered locus">ACICU_00976</name>
</gene>
<dbReference type="EMBL" id="CP000863">
    <property type="protein sequence ID" value="ACC56288.1"/>
    <property type="molecule type" value="Genomic_DNA"/>
</dbReference>
<dbReference type="RefSeq" id="WP_000708729.1">
    <property type="nucleotide sequence ID" value="NZ_CP031380.1"/>
</dbReference>
<dbReference type="SMR" id="B2HVS2"/>
<dbReference type="KEGG" id="abc:ACICU_00976"/>
<dbReference type="HOGENOM" id="CLU_093757_2_0_6"/>
<dbReference type="Proteomes" id="UP000008839">
    <property type="component" value="Chromosome"/>
</dbReference>
<dbReference type="GO" id="GO:0005737">
    <property type="term" value="C:cytoplasm"/>
    <property type="evidence" value="ECO:0007669"/>
    <property type="project" value="UniProtKB-SubCell"/>
</dbReference>
<dbReference type="GO" id="GO:0016151">
    <property type="term" value="F:nickel cation binding"/>
    <property type="evidence" value="ECO:0007669"/>
    <property type="project" value="UniProtKB-UniRule"/>
</dbReference>
<dbReference type="GO" id="GO:0051082">
    <property type="term" value="F:unfolded protein binding"/>
    <property type="evidence" value="ECO:0007669"/>
    <property type="project" value="UniProtKB-UniRule"/>
</dbReference>
<dbReference type="GO" id="GO:0006457">
    <property type="term" value="P:protein folding"/>
    <property type="evidence" value="ECO:0007669"/>
    <property type="project" value="InterPro"/>
</dbReference>
<dbReference type="GO" id="GO:0065003">
    <property type="term" value="P:protein-containing complex assembly"/>
    <property type="evidence" value="ECO:0007669"/>
    <property type="project" value="InterPro"/>
</dbReference>
<dbReference type="GO" id="GO:0019627">
    <property type="term" value="P:urea metabolic process"/>
    <property type="evidence" value="ECO:0007669"/>
    <property type="project" value="InterPro"/>
</dbReference>
<dbReference type="CDD" id="cd00571">
    <property type="entry name" value="UreE"/>
    <property type="match status" value="1"/>
</dbReference>
<dbReference type="Gene3D" id="2.60.260.20">
    <property type="entry name" value="Urease metallochaperone UreE, N-terminal domain"/>
    <property type="match status" value="1"/>
</dbReference>
<dbReference type="Gene3D" id="3.30.70.790">
    <property type="entry name" value="UreE, C-terminal domain"/>
    <property type="match status" value="1"/>
</dbReference>
<dbReference type="HAMAP" id="MF_00822">
    <property type="entry name" value="UreE"/>
    <property type="match status" value="1"/>
</dbReference>
<dbReference type="InterPro" id="IPR012406">
    <property type="entry name" value="UreE"/>
</dbReference>
<dbReference type="InterPro" id="IPR007864">
    <property type="entry name" value="UreE_C_dom"/>
</dbReference>
<dbReference type="InterPro" id="IPR004029">
    <property type="entry name" value="UreE_N"/>
</dbReference>
<dbReference type="InterPro" id="IPR036118">
    <property type="entry name" value="UreE_N_sf"/>
</dbReference>
<dbReference type="NCBIfam" id="NF009751">
    <property type="entry name" value="PRK13261.1-1"/>
    <property type="match status" value="1"/>
</dbReference>
<dbReference type="Pfam" id="PF05194">
    <property type="entry name" value="UreE_C"/>
    <property type="match status" value="1"/>
</dbReference>
<dbReference type="Pfam" id="PF02814">
    <property type="entry name" value="UreE_N"/>
    <property type="match status" value="1"/>
</dbReference>
<dbReference type="PIRSF" id="PIRSF036402">
    <property type="entry name" value="Ureas_acces_UreE"/>
    <property type="match status" value="1"/>
</dbReference>
<dbReference type="SMART" id="SM00988">
    <property type="entry name" value="UreE_N"/>
    <property type="match status" value="1"/>
</dbReference>
<dbReference type="SUPFAM" id="SSF69737">
    <property type="entry name" value="Urease metallochaperone UreE, C-terminal domain"/>
    <property type="match status" value="1"/>
</dbReference>
<dbReference type="SUPFAM" id="SSF69287">
    <property type="entry name" value="Urease metallochaperone UreE, N-terminal domain"/>
    <property type="match status" value="1"/>
</dbReference>
<organism>
    <name type="scientific">Acinetobacter baumannii (strain ACICU)</name>
    <dbReference type="NCBI Taxonomy" id="405416"/>
    <lineage>
        <taxon>Bacteria</taxon>
        <taxon>Pseudomonadati</taxon>
        <taxon>Pseudomonadota</taxon>
        <taxon>Gammaproteobacteria</taxon>
        <taxon>Moraxellales</taxon>
        <taxon>Moraxellaceae</taxon>
        <taxon>Acinetobacter</taxon>
        <taxon>Acinetobacter calcoaceticus/baumannii complex</taxon>
    </lineage>
</organism>
<feature type="chain" id="PRO_1000197428" description="Urease accessory protein UreE">
    <location>
        <begin position="1"/>
        <end position="160"/>
    </location>
</feature>
<accession>B2HVS2</accession>
<comment type="function">
    <text evidence="1">Involved in urease metallocenter assembly. Binds nickel. Probably functions as a nickel donor during metallocenter assembly.</text>
</comment>
<comment type="subcellular location">
    <subcellularLocation>
        <location evidence="1">Cytoplasm</location>
    </subcellularLocation>
</comment>
<comment type="similarity">
    <text evidence="1">Belongs to the UreE family.</text>
</comment>
<name>UREE_ACIBC</name>